<organism>
    <name type="scientific">Proteus mirabilis (strain HI4320)</name>
    <dbReference type="NCBI Taxonomy" id="529507"/>
    <lineage>
        <taxon>Bacteria</taxon>
        <taxon>Pseudomonadati</taxon>
        <taxon>Pseudomonadota</taxon>
        <taxon>Gammaproteobacteria</taxon>
        <taxon>Enterobacterales</taxon>
        <taxon>Morganellaceae</taxon>
        <taxon>Proteus</taxon>
    </lineage>
</organism>
<feature type="chain" id="PRO_1000125577" description="o-succinylbenzoate synthase">
    <location>
        <begin position="1"/>
        <end position="323"/>
    </location>
</feature>
<feature type="active site" description="Proton donor" evidence="1">
    <location>
        <position position="134"/>
    </location>
</feature>
<feature type="active site" description="Proton acceptor" evidence="1">
    <location>
        <position position="236"/>
    </location>
</feature>
<feature type="binding site" evidence="1">
    <location>
        <position position="162"/>
    </location>
    <ligand>
        <name>Mg(2+)</name>
        <dbReference type="ChEBI" id="CHEBI:18420"/>
    </ligand>
</feature>
<feature type="binding site" evidence="1">
    <location>
        <position position="191"/>
    </location>
    <ligand>
        <name>Mg(2+)</name>
        <dbReference type="ChEBI" id="CHEBI:18420"/>
    </ligand>
</feature>
<feature type="binding site" evidence="1">
    <location>
        <position position="214"/>
    </location>
    <ligand>
        <name>Mg(2+)</name>
        <dbReference type="ChEBI" id="CHEBI:18420"/>
    </ligand>
</feature>
<accession>B4EZ39</accession>
<gene>
    <name evidence="1" type="primary">menC</name>
    <name type="ordered locus">PMI1742</name>
</gene>
<dbReference type="EC" id="4.2.1.113" evidence="1"/>
<dbReference type="EMBL" id="AM942759">
    <property type="protein sequence ID" value="CAR43629.1"/>
    <property type="molecule type" value="Genomic_DNA"/>
</dbReference>
<dbReference type="RefSeq" id="WP_004243667.1">
    <property type="nucleotide sequence ID" value="NC_010554.1"/>
</dbReference>
<dbReference type="SMR" id="B4EZ39"/>
<dbReference type="EnsemblBacteria" id="CAR43629">
    <property type="protein sequence ID" value="CAR43629"/>
    <property type="gene ID" value="PMI1742"/>
</dbReference>
<dbReference type="GeneID" id="6800493"/>
<dbReference type="KEGG" id="pmr:PMI1742"/>
<dbReference type="eggNOG" id="COG1441">
    <property type="taxonomic scope" value="Bacteria"/>
</dbReference>
<dbReference type="HOGENOM" id="CLU_030273_0_1_6"/>
<dbReference type="UniPathway" id="UPA00079"/>
<dbReference type="UniPathway" id="UPA01057">
    <property type="reaction ID" value="UER00165"/>
</dbReference>
<dbReference type="Proteomes" id="UP000008319">
    <property type="component" value="Chromosome"/>
</dbReference>
<dbReference type="GO" id="GO:0000287">
    <property type="term" value="F:magnesium ion binding"/>
    <property type="evidence" value="ECO:0007669"/>
    <property type="project" value="UniProtKB-UniRule"/>
</dbReference>
<dbReference type="GO" id="GO:0043748">
    <property type="term" value="F:O-succinylbenzoate synthase activity"/>
    <property type="evidence" value="ECO:0007669"/>
    <property type="project" value="UniProtKB-EC"/>
</dbReference>
<dbReference type="GO" id="GO:0009234">
    <property type="term" value="P:menaquinone biosynthetic process"/>
    <property type="evidence" value="ECO:0007669"/>
    <property type="project" value="UniProtKB-UniRule"/>
</dbReference>
<dbReference type="CDD" id="cd03320">
    <property type="entry name" value="OSBS"/>
    <property type="match status" value="1"/>
</dbReference>
<dbReference type="FunFam" id="3.20.20.120:FF:000006">
    <property type="entry name" value="o-succinylbenzoate synthase"/>
    <property type="match status" value="1"/>
</dbReference>
<dbReference type="Gene3D" id="3.20.20.120">
    <property type="entry name" value="Enolase-like C-terminal domain"/>
    <property type="match status" value="1"/>
</dbReference>
<dbReference type="Gene3D" id="3.30.390.10">
    <property type="entry name" value="Enolase-like, N-terminal domain"/>
    <property type="match status" value="1"/>
</dbReference>
<dbReference type="HAMAP" id="MF_00470">
    <property type="entry name" value="MenC_1"/>
    <property type="match status" value="1"/>
</dbReference>
<dbReference type="InterPro" id="IPR036849">
    <property type="entry name" value="Enolase-like_C_sf"/>
</dbReference>
<dbReference type="InterPro" id="IPR029017">
    <property type="entry name" value="Enolase-like_N"/>
</dbReference>
<dbReference type="InterPro" id="IPR029065">
    <property type="entry name" value="Enolase_C-like"/>
</dbReference>
<dbReference type="InterPro" id="IPR013342">
    <property type="entry name" value="Mandelate_racemase_C"/>
</dbReference>
<dbReference type="InterPro" id="IPR010196">
    <property type="entry name" value="OSB_synthase_MenC1"/>
</dbReference>
<dbReference type="InterPro" id="IPR041338">
    <property type="entry name" value="OSBS_N"/>
</dbReference>
<dbReference type="NCBIfam" id="TIGR01927">
    <property type="entry name" value="menC_gam_Gplu"/>
    <property type="match status" value="1"/>
</dbReference>
<dbReference type="NCBIfam" id="NF003473">
    <property type="entry name" value="PRK05105.1"/>
    <property type="match status" value="1"/>
</dbReference>
<dbReference type="PANTHER" id="PTHR48073:SF2">
    <property type="entry name" value="O-SUCCINYLBENZOATE SYNTHASE"/>
    <property type="match status" value="1"/>
</dbReference>
<dbReference type="PANTHER" id="PTHR48073">
    <property type="entry name" value="O-SUCCINYLBENZOATE SYNTHASE-RELATED"/>
    <property type="match status" value="1"/>
</dbReference>
<dbReference type="Pfam" id="PF21508">
    <property type="entry name" value="MenC_N"/>
    <property type="match status" value="1"/>
</dbReference>
<dbReference type="Pfam" id="PF13378">
    <property type="entry name" value="MR_MLE_C"/>
    <property type="match status" value="1"/>
</dbReference>
<dbReference type="SFLD" id="SFLDS00001">
    <property type="entry name" value="Enolase"/>
    <property type="match status" value="1"/>
</dbReference>
<dbReference type="SFLD" id="SFLDF00009">
    <property type="entry name" value="o-succinylbenzoate_synthase"/>
    <property type="match status" value="1"/>
</dbReference>
<dbReference type="SMART" id="SM00922">
    <property type="entry name" value="MR_MLE"/>
    <property type="match status" value="1"/>
</dbReference>
<dbReference type="SUPFAM" id="SSF51604">
    <property type="entry name" value="Enolase C-terminal domain-like"/>
    <property type="match status" value="1"/>
</dbReference>
<dbReference type="SUPFAM" id="SSF54826">
    <property type="entry name" value="Enolase N-terminal domain-like"/>
    <property type="match status" value="1"/>
</dbReference>
<keyword id="KW-0456">Lyase</keyword>
<keyword id="KW-0460">Magnesium</keyword>
<keyword id="KW-0474">Menaquinone biosynthesis</keyword>
<keyword id="KW-0479">Metal-binding</keyword>
<keyword id="KW-1185">Reference proteome</keyword>
<proteinExistence type="inferred from homology"/>
<name>MENC_PROMH</name>
<evidence type="ECO:0000255" key="1">
    <source>
        <dbReference type="HAMAP-Rule" id="MF_00470"/>
    </source>
</evidence>
<reference key="1">
    <citation type="journal article" date="2008" name="J. Bacteriol.">
        <title>Complete genome sequence of uropathogenic Proteus mirabilis, a master of both adherence and motility.</title>
        <authorList>
            <person name="Pearson M.M."/>
            <person name="Sebaihia M."/>
            <person name="Churcher C."/>
            <person name="Quail M.A."/>
            <person name="Seshasayee A.S."/>
            <person name="Luscombe N.M."/>
            <person name="Abdellah Z."/>
            <person name="Arrosmith C."/>
            <person name="Atkin B."/>
            <person name="Chillingworth T."/>
            <person name="Hauser H."/>
            <person name="Jagels K."/>
            <person name="Moule S."/>
            <person name="Mungall K."/>
            <person name="Norbertczak H."/>
            <person name="Rabbinowitsch E."/>
            <person name="Walker D."/>
            <person name="Whithead S."/>
            <person name="Thomson N.R."/>
            <person name="Rather P.N."/>
            <person name="Parkhill J."/>
            <person name="Mobley H.L.T."/>
        </authorList>
    </citation>
    <scope>NUCLEOTIDE SEQUENCE [LARGE SCALE GENOMIC DNA]</scope>
    <source>
        <strain>HI4320</strain>
    </source>
</reference>
<protein>
    <recommendedName>
        <fullName evidence="1">o-succinylbenzoate synthase</fullName>
        <shortName evidence="1">OSB synthase</shortName>
        <shortName evidence="1">OSBS</shortName>
        <ecNumber evidence="1">4.2.1.113</ecNumber>
    </recommendedName>
    <alternativeName>
        <fullName evidence="1">4-(2'-carboxyphenyl)-4-oxybutyric acid synthase</fullName>
    </alternativeName>
    <alternativeName>
        <fullName evidence="1">o-succinylbenzoic acid synthase</fullName>
    </alternativeName>
</protein>
<comment type="function">
    <text evidence="1">Converts 2-succinyl-6-hydroxy-2,4-cyclohexadiene-1-carboxylate (SHCHC) to 2-succinylbenzoate (OSB).</text>
</comment>
<comment type="catalytic activity">
    <reaction evidence="1">
        <text>(1R,6R)-6-hydroxy-2-succinyl-cyclohexa-2,4-diene-1-carboxylate = 2-succinylbenzoate + H2O</text>
        <dbReference type="Rhea" id="RHEA:10196"/>
        <dbReference type="ChEBI" id="CHEBI:15377"/>
        <dbReference type="ChEBI" id="CHEBI:18325"/>
        <dbReference type="ChEBI" id="CHEBI:58689"/>
        <dbReference type="EC" id="4.2.1.113"/>
    </reaction>
</comment>
<comment type="cofactor">
    <cofactor evidence="1">
        <name>a divalent metal cation</name>
        <dbReference type="ChEBI" id="CHEBI:60240"/>
    </cofactor>
</comment>
<comment type="pathway">
    <text evidence="1">Quinol/quinone metabolism; 1,4-dihydroxy-2-naphthoate biosynthesis; 1,4-dihydroxy-2-naphthoate from chorismate: step 4/7.</text>
</comment>
<comment type="pathway">
    <text evidence="1">Quinol/quinone metabolism; menaquinone biosynthesis.</text>
</comment>
<comment type="similarity">
    <text evidence="1">Belongs to the mandelate racemase/muconate lactonizing enzyme family. MenC type 1 subfamily.</text>
</comment>
<sequence>MRNAKLYSFSLPMEAGVVLRYQRLKTRDGFLVCLEQNGKQGWGEISPLPEFSHETLEQAQDAAQSWLAAWCLGENPTDSELPSVAFGISCALAELEGTLPEEANYRAAPLCNGDPDDLILSLNEMSGEKVAKVKVGLYEAVRDGIVVNLLLEAIPDLKLRLDANRSWTPAKAEGFAKYVNPQWRDRIAFLEEPCKTPEESLAFSQATGINIAWDETVRDEGFEVKAQEGVTAIVIKPTLVGSLARCQSIVEQAHALGLEAIISSSIESSFGLTQLARVAQWLTPDSIPGLDTVDLIKQQLIRCWPDVDIPLITLEQLKTVWQQ</sequence>